<accession>Q2NRD3</accession>
<gene>
    <name evidence="1" type="primary">speB</name>
    <name type="ordered locus">SG2017</name>
</gene>
<evidence type="ECO:0000255" key="1">
    <source>
        <dbReference type="HAMAP-Rule" id="MF_01418"/>
    </source>
</evidence>
<proteinExistence type="inferred from homology"/>
<dbReference type="EC" id="3.5.3.11" evidence="1"/>
<dbReference type="EMBL" id="AP008232">
    <property type="protein sequence ID" value="BAE75292.1"/>
    <property type="molecule type" value="Genomic_DNA"/>
</dbReference>
<dbReference type="RefSeq" id="WP_011411747.1">
    <property type="nucleotide sequence ID" value="NC_007712.1"/>
</dbReference>
<dbReference type="SMR" id="Q2NRD3"/>
<dbReference type="STRING" id="343509.SG2017"/>
<dbReference type="KEGG" id="sgl:SG2017"/>
<dbReference type="eggNOG" id="COG0010">
    <property type="taxonomic scope" value="Bacteria"/>
</dbReference>
<dbReference type="HOGENOM" id="CLU_039478_0_0_6"/>
<dbReference type="OrthoDB" id="9789727at2"/>
<dbReference type="BioCyc" id="SGLO343509:SGP1_RS18450-MONOMER"/>
<dbReference type="UniPathway" id="UPA00534">
    <property type="reaction ID" value="UER00287"/>
</dbReference>
<dbReference type="Proteomes" id="UP000001932">
    <property type="component" value="Chromosome"/>
</dbReference>
<dbReference type="GO" id="GO:0008783">
    <property type="term" value="F:agmatinase activity"/>
    <property type="evidence" value="ECO:0007669"/>
    <property type="project" value="UniProtKB-UniRule"/>
</dbReference>
<dbReference type="GO" id="GO:0030145">
    <property type="term" value="F:manganese ion binding"/>
    <property type="evidence" value="ECO:0007669"/>
    <property type="project" value="InterPro"/>
</dbReference>
<dbReference type="GO" id="GO:0033389">
    <property type="term" value="P:putrescine biosynthetic process from arginine, via agmatine"/>
    <property type="evidence" value="ECO:0007669"/>
    <property type="project" value="TreeGrafter"/>
</dbReference>
<dbReference type="GO" id="GO:0008295">
    <property type="term" value="P:spermidine biosynthetic process"/>
    <property type="evidence" value="ECO:0007669"/>
    <property type="project" value="UniProtKB-UniRule"/>
</dbReference>
<dbReference type="CDD" id="cd11592">
    <property type="entry name" value="Agmatinase_PAH"/>
    <property type="match status" value="1"/>
</dbReference>
<dbReference type="FunFam" id="3.40.800.10:FF:000001">
    <property type="entry name" value="Agmatinase"/>
    <property type="match status" value="1"/>
</dbReference>
<dbReference type="Gene3D" id="3.40.800.10">
    <property type="entry name" value="Ureohydrolase domain"/>
    <property type="match status" value="1"/>
</dbReference>
<dbReference type="HAMAP" id="MF_01418">
    <property type="entry name" value="SpeB"/>
    <property type="match status" value="1"/>
</dbReference>
<dbReference type="InterPro" id="IPR023694">
    <property type="entry name" value="Agmatinase"/>
</dbReference>
<dbReference type="InterPro" id="IPR005925">
    <property type="entry name" value="Agmatinase-rel"/>
</dbReference>
<dbReference type="InterPro" id="IPR006035">
    <property type="entry name" value="Ureohydrolase"/>
</dbReference>
<dbReference type="InterPro" id="IPR023696">
    <property type="entry name" value="Ureohydrolase_dom_sf"/>
</dbReference>
<dbReference type="InterPro" id="IPR020855">
    <property type="entry name" value="Ureohydrolase_Mn_BS"/>
</dbReference>
<dbReference type="NCBIfam" id="TIGR01230">
    <property type="entry name" value="agmatinase"/>
    <property type="match status" value="1"/>
</dbReference>
<dbReference type="NCBIfam" id="NF002564">
    <property type="entry name" value="PRK02190.1"/>
    <property type="match status" value="1"/>
</dbReference>
<dbReference type="PANTHER" id="PTHR11358">
    <property type="entry name" value="ARGINASE/AGMATINASE"/>
    <property type="match status" value="1"/>
</dbReference>
<dbReference type="PANTHER" id="PTHR11358:SF26">
    <property type="entry name" value="GUANIDINO ACID HYDROLASE, MITOCHONDRIAL"/>
    <property type="match status" value="1"/>
</dbReference>
<dbReference type="Pfam" id="PF00491">
    <property type="entry name" value="Arginase"/>
    <property type="match status" value="1"/>
</dbReference>
<dbReference type="PIRSF" id="PIRSF036979">
    <property type="entry name" value="Arginase"/>
    <property type="match status" value="1"/>
</dbReference>
<dbReference type="SUPFAM" id="SSF52768">
    <property type="entry name" value="Arginase/deacetylase"/>
    <property type="match status" value="1"/>
</dbReference>
<dbReference type="PROSITE" id="PS01053">
    <property type="entry name" value="ARGINASE_1"/>
    <property type="match status" value="1"/>
</dbReference>
<dbReference type="PROSITE" id="PS51409">
    <property type="entry name" value="ARGINASE_2"/>
    <property type="match status" value="1"/>
</dbReference>
<comment type="function">
    <text evidence="1">Catalyzes the formation of putrescine from agmatine.</text>
</comment>
<comment type="catalytic activity">
    <reaction evidence="1">
        <text>agmatine + H2O = urea + putrescine</text>
        <dbReference type="Rhea" id="RHEA:13929"/>
        <dbReference type="ChEBI" id="CHEBI:15377"/>
        <dbReference type="ChEBI" id="CHEBI:16199"/>
        <dbReference type="ChEBI" id="CHEBI:58145"/>
        <dbReference type="ChEBI" id="CHEBI:326268"/>
        <dbReference type="EC" id="3.5.3.11"/>
    </reaction>
</comment>
<comment type="cofactor">
    <cofactor evidence="1">
        <name>Mn(2+)</name>
        <dbReference type="ChEBI" id="CHEBI:29035"/>
    </cofactor>
</comment>
<comment type="pathway">
    <text evidence="1">Amine and polyamine biosynthesis; putrescine biosynthesis via agmatine pathway; putrescine from agmatine: step 1/1.</text>
</comment>
<comment type="similarity">
    <text evidence="1">Belongs to the arginase family. Agmatinase subfamily.</text>
</comment>
<reference key="1">
    <citation type="journal article" date="2006" name="Genome Res.">
        <title>Massive genome erosion and functional adaptations provide insights into the symbiotic lifestyle of Sodalis glossinidius in the tsetse host.</title>
        <authorList>
            <person name="Toh H."/>
            <person name="Weiss B.L."/>
            <person name="Perkin S.A.H."/>
            <person name="Yamashita A."/>
            <person name="Oshima K."/>
            <person name="Hattori M."/>
            <person name="Aksoy S."/>
        </authorList>
    </citation>
    <scope>NUCLEOTIDE SEQUENCE [LARGE SCALE GENOMIC DNA]</scope>
    <source>
        <strain>morsitans</strain>
    </source>
</reference>
<protein>
    <recommendedName>
        <fullName evidence="1">Agmatinase</fullName>
        <ecNumber evidence="1">3.5.3.11</ecNumber>
    </recommendedName>
    <alternativeName>
        <fullName evidence="1">Agmatine ureohydrolase</fullName>
        <shortName evidence="1">AUH</shortName>
    </alternativeName>
</protein>
<organism>
    <name type="scientific">Sodalis glossinidius (strain morsitans)</name>
    <dbReference type="NCBI Taxonomy" id="343509"/>
    <lineage>
        <taxon>Bacteria</taxon>
        <taxon>Pseudomonadati</taxon>
        <taxon>Pseudomonadota</taxon>
        <taxon>Gammaproteobacteria</taxon>
        <taxon>Enterobacterales</taxon>
        <taxon>Bruguierivoracaceae</taxon>
        <taxon>Sodalis</taxon>
    </lineage>
</organism>
<keyword id="KW-0378">Hydrolase</keyword>
<keyword id="KW-0464">Manganese</keyword>
<keyword id="KW-0479">Metal-binding</keyword>
<keyword id="KW-0620">Polyamine biosynthesis</keyword>
<keyword id="KW-0661">Putrescine biosynthesis</keyword>
<keyword id="KW-0745">Spermidine biosynthesis</keyword>
<feature type="chain" id="PRO_1000024288" description="Agmatinase">
    <location>
        <begin position="1"/>
        <end position="307"/>
    </location>
</feature>
<feature type="binding site" evidence="1">
    <location>
        <position position="126"/>
    </location>
    <ligand>
        <name>Mn(2+)</name>
        <dbReference type="ChEBI" id="CHEBI:29035"/>
    </ligand>
</feature>
<feature type="binding site" evidence="1">
    <location>
        <position position="149"/>
    </location>
    <ligand>
        <name>Mn(2+)</name>
        <dbReference type="ChEBI" id="CHEBI:29035"/>
    </ligand>
</feature>
<feature type="binding site" evidence="1">
    <location>
        <position position="151"/>
    </location>
    <ligand>
        <name>Mn(2+)</name>
        <dbReference type="ChEBI" id="CHEBI:29035"/>
    </ligand>
</feature>
<feature type="binding site" evidence="1">
    <location>
        <position position="153"/>
    </location>
    <ligand>
        <name>Mn(2+)</name>
        <dbReference type="ChEBI" id="CHEBI:29035"/>
    </ligand>
</feature>
<feature type="binding site" evidence="1">
    <location>
        <position position="230"/>
    </location>
    <ligand>
        <name>Mn(2+)</name>
        <dbReference type="ChEBI" id="CHEBI:29035"/>
    </ligand>
</feature>
<feature type="binding site" evidence="1">
    <location>
        <position position="232"/>
    </location>
    <ligand>
        <name>Mn(2+)</name>
        <dbReference type="ChEBI" id="CHEBI:29035"/>
    </ligand>
</feature>
<sequence>MTTLGHNYDNSLVSNAFGFLRLPLEFNPYATDADWVITGIPFDMATSGRAGCRHGPAAIRQVSTNLAWEGCRWPWDFDVRKRLKVVDCGDLVYEFGDAQDFCDKLQDHAERLLAAGKRMLSFGGDHFVTLPLLCAHAKHFGKMALVHFDAHTDTYANGSKFDHGSMFYHAPNEGLISPAHSVQIGIRTEFERDNGFTVLDAGQVNDRSVDDILAQVKQIVGNLPVYLTFDIDCLDPSAAPGTGTPVIGGLTSDRALKLVRGLQPLNIVGMDIVEVAPAYDQAQITALVAATLALEMLYIQGAKRGDD</sequence>
<name>SPEB_SODGM</name>